<gene>
    <name evidence="1" type="primary">frsA</name>
    <name type="ordered locus">ECED1_0273</name>
</gene>
<comment type="function">
    <text evidence="1">Catalyzes the hydrolysis of esters.</text>
</comment>
<comment type="catalytic activity">
    <reaction evidence="1">
        <text>a carboxylic ester + H2O = an alcohol + a carboxylate + H(+)</text>
        <dbReference type="Rhea" id="RHEA:21164"/>
        <dbReference type="ChEBI" id="CHEBI:15377"/>
        <dbReference type="ChEBI" id="CHEBI:15378"/>
        <dbReference type="ChEBI" id="CHEBI:29067"/>
        <dbReference type="ChEBI" id="CHEBI:30879"/>
        <dbReference type="ChEBI" id="CHEBI:33308"/>
        <dbReference type="EC" id="3.1.1.1"/>
    </reaction>
</comment>
<comment type="similarity">
    <text evidence="1">Belongs to the FrsA family.</text>
</comment>
<accession>B7MQ75</accession>
<protein>
    <recommendedName>
        <fullName evidence="1">Esterase FrsA</fullName>
        <ecNumber evidence="1">3.1.1.1</ecNumber>
    </recommendedName>
</protein>
<proteinExistence type="inferred from homology"/>
<evidence type="ECO:0000255" key="1">
    <source>
        <dbReference type="HAMAP-Rule" id="MF_01063"/>
    </source>
</evidence>
<sequence length="414" mass="47040">MTQANLSETLFKPRFKHPETSTLVRRFSHGAQLPVQSALDGKTIPHWYRMINRLMWIWRGIDPREILDVQARIVMSDAERTDDDLYDTVIGYRGGNWIYEWATQAMVWQQKACAEEDPQLSGRHWLHAATLYNIAAYPHLKGDDLAEQAQALSNRAYEEAAQRLPGTMRQMEFTVPGGAPITGFLHMPKGDGPFPTVLMCGGLDAMQTDYYSLYERYFAPRGIAMLTIDMPSVGFSSKWKLTQDSSLLHQHVLKALPNVPWVDHTRVAAFGFRFGANVAVRLAYLESPRLKVVACLGPVVHTLLSDFKCQQQVPEMYLDVLASRLGMHDASDEALRVELNRYSLKVQGLLGRRCPTPMLSGYWKNDPFSPEEDSRLITSSSADGKLLEIPFNPVYRNFDKGLQEITDWIEKRLC</sequence>
<organism>
    <name type="scientific">Escherichia coli O81 (strain ED1a)</name>
    <dbReference type="NCBI Taxonomy" id="585397"/>
    <lineage>
        <taxon>Bacteria</taxon>
        <taxon>Pseudomonadati</taxon>
        <taxon>Pseudomonadota</taxon>
        <taxon>Gammaproteobacteria</taxon>
        <taxon>Enterobacterales</taxon>
        <taxon>Enterobacteriaceae</taxon>
        <taxon>Escherichia</taxon>
    </lineage>
</organism>
<reference key="1">
    <citation type="journal article" date="2009" name="PLoS Genet.">
        <title>Organised genome dynamics in the Escherichia coli species results in highly diverse adaptive paths.</title>
        <authorList>
            <person name="Touchon M."/>
            <person name="Hoede C."/>
            <person name="Tenaillon O."/>
            <person name="Barbe V."/>
            <person name="Baeriswyl S."/>
            <person name="Bidet P."/>
            <person name="Bingen E."/>
            <person name="Bonacorsi S."/>
            <person name="Bouchier C."/>
            <person name="Bouvet O."/>
            <person name="Calteau A."/>
            <person name="Chiapello H."/>
            <person name="Clermont O."/>
            <person name="Cruveiller S."/>
            <person name="Danchin A."/>
            <person name="Diard M."/>
            <person name="Dossat C."/>
            <person name="Karoui M.E."/>
            <person name="Frapy E."/>
            <person name="Garry L."/>
            <person name="Ghigo J.M."/>
            <person name="Gilles A.M."/>
            <person name="Johnson J."/>
            <person name="Le Bouguenec C."/>
            <person name="Lescat M."/>
            <person name="Mangenot S."/>
            <person name="Martinez-Jehanne V."/>
            <person name="Matic I."/>
            <person name="Nassif X."/>
            <person name="Oztas S."/>
            <person name="Petit M.A."/>
            <person name="Pichon C."/>
            <person name="Rouy Z."/>
            <person name="Ruf C.S."/>
            <person name="Schneider D."/>
            <person name="Tourret J."/>
            <person name="Vacherie B."/>
            <person name="Vallenet D."/>
            <person name="Medigue C."/>
            <person name="Rocha E.P.C."/>
            <person name="Denamur E."/>
        </authorList>
    </citation>
    <scope>NUCLEOTIDE SEQUENCE [LARGE SCALE GENOMIC DNA]</scope>
    <source>
        <strain>ED1a</strain>
    </source>
</reference>
<name>FRSA_ECO81</name>
<feature type="chain" id="PRO_1000149723" description="Esterase FrsA">
    <location>
        <begin position="1"/>
        <end position="414"/>
    </location>
</feature>
<keyword id="KW-0378">Hydrolase</keyword>
<keyword id="KW-0719">Serine esterase</keyword>
<dbReference type="EC" id="3.1.1.1" evidence="1"/>
<dbReference type="EMBL" id="CU928162">
    <property type="protein sequence ID" value="CAR06487.1"/>
    <property type="molecule type" value="Genomic_DNA"/>
</dbReference>
<dbReference type="RefSeq" id="WP_000189573.1">
    <property type="nucleotide sequence ID" value="NC_011745.1"/>
</dbReference>
<dbReference type="SMR" id="B7MQ75"/>
<dbReference type="ESTHER" id="ecoli-yafa">
    <property type="family name" value="Duf_1100-R"/>
</dbReference>
<dbReference type="KEGG" id="ecq:ECED1_0273"/>
<dbReference type="HOGENOM" id="CLU_036819_0_0_6"/>
<dbReference type="Proteomes" id="UP000000748">
    <property type="component" value="Chromosome"/>
</dbReference>
<dbReference type="GO" id="GO:0106435">
    <property type="term" value="F:carboxylesterase activity"/>
    <property type="evidence" value="ECO:0007669"/>
    <property type="project" value="UniProtKB-EC"/>
</dbReference>
<dbReference type="FunFam" id="3.40.50.1820:FF:000022">
    <property type="entry name" value="Esterase FrsA"/>
    <property type="match status" value="1"/>
</dbReference>
<dbReference type="Gene3D" id="3.40.50.1820">
    <property type="entry name" value="alpha/beta hydrolase"/>
    <property type="match status" value="1"/>
</dbReference>
<dbReference type="HAMAP" id="MF_01063">
    <property type="entry name" value="FrsA"/>
    <property type="match status" value="1"/>
</dbReference>
<dbReference type="InterPro" id="IPR029058">
    <property type="entry name" value="AB_hydrolase_fold"/>
</dbReference>
<dbReference type="InterPro" id="IPR043423">
    <property type="entry name" value="FrsA"/>
</dbReference>
<dbReference type="InterPro" id="IPR010520">
    <property type="entry name" value="FrsA-like"/>
</dbReference>
<dbReference type="InterPro" id="IPR050261">
    <property type="entry name" value="FrsA_esterase"/>
</dbReference>
<dbReference type="NCBIfam" id="NF003460">
    <property type="entry name" value="PRK05077.1"/>
    <property type="match status" value="1"/>
</dbReference>
<dbReference type="PANTHER" id="PTHR22946">
    <property type="entry name" value="DIENELACTONE HYDROLASE DOMAIN-CONTAINING PROTEIN-RELATED"/>
    <property type="match status" value="1"/>
</dbReference>
<dbReference type="PANTHER" id="PTHR22946:SF4">
    <property type="entry name" value="ESTERASE FRSA"/>
    <property type="match status" value="1"/>
</dbReference>
<dbReference type="Pfam" id="PF06500">
    <property type="entry name" value="FrsA-like"/>
    <property type="match status" value="1"/>
</dbReference>
<dbReference type="SUPFAM" id="SSF53474">
    <property type="entry name" value="alpha/beta-Hydrolases"/>
    <property type="match status" value="1"/>
</dbReference>